<organism>
    <name type="scientific">Ehrlichia ruminantium (strain Welgevonden)</name>
    <dbReference type="NCBI Taxonomy" id="254945"/>
    <lineage>
        <taxon>Bacteria</taxon>
        <taxon>Pseudomonadati</taxon>
        <taxon>Pseudomonadota</taxon>
        <taxon>Alphaproteobacteria</taxon>
        <taxon>Rickettsiales</taxon>
        <taxon>Anaplasmataceae</taxon>
        <taxon>Ehrlichia</taxon>
    </lineage>
</organism>
<feature type="chain" id="PRO_0000250905" description="NADH-quinone oxidoreductase subunit I">
    <location>
        <begin position="1"/>
        <end position="168"/>
    </location>
</feature>
<feature type="domain" description="4Fe-4S ferredoxin-type 1" evidence="1">
    <location>
        <begin position="58"/>
        <end position="88"/>
    </location>
</feature>
<feature type="domain" description="4Fe-4S ferredoxin-type 2" evidence="1">
    <location>
        <begin position="99"/>
        <end position="128"/>
    </location>
</feature>
<feature type="binding site" evidence="1">
    <location>
        <position position="68"/>
    </location>
    <ligand>
        <name>[4Fe-4S] cluster</name>
        <dbReference type="ChEBI" id="CHEBI:49883"/>
        <label>1</label>
    </ligand>
</feature>
<feature type="binding site" evidence="1">
    <location>
        <position position="71"/>
    </location>
    <ligand>
        <name>[4Fe-4S] cluster</name>
        <dbReference type="ChEBI" id="CHEBI:49883"/>
        <label>1</label>
    </ligand>
</feature>
<feature type="binding site" evidence="1">
    <location>
        <position position="74"/>
    </location>
    <ligand>
        <name>[4Fe-4S] cluster</name>
        <dbReference type="ChEBI" id="CHEBI:49883"/>
        <label>1</label>
    </ligand>
</feature>
<feature type="binding site" evidence="1">
    <location>
        <position position="78"/>
    </location>
    <ligand>
        <name>[4Fe-4S] cluster</name>
        <dbReference type="ChEBI" id="CHEBI:49883"/>
        <label>2</label>
    </ligand>
</feature>
<feature type="binding site" evidence="1">
    <location>
        <position position="108"/>
    </location>
    <ligand>
        <name>[4Fe-4S] cluster</name>
        <dbReference type="ChEBI" id="CHEBI:49883"/>
        <label>2</label>
    </ligand>
</feature>
<feature type="binding site" evidence="1">
    <location>
        <position position="111"/>
    </location>
    <ligand>
        <name>[4Fe-4S] cluster</name>
        <dbReference type="ChEBI" id="CHEBI:49883"/>
        <label>2</label>
    </ligand>
</feature>
<feature type="binding site" evidence="1">
    <location>
        <position position="114"/>
    </location>
    <ligand>
        <name>[4Fe-4S] cluster</name>
        <dbReference type="ChEBI" id="CHEBI:49883"/>
        <label>2</label>
    </ligand>
</feature>
<feature type="binding site" evidence="1">
    <location>
        <position position="118"/>
    </location>
    <ligand>
        <name>[4Fe-4S] cluster</name>
        <dbReference type="ChEBI" id="CHEBI:49883"/>
        <label>1</label>
    </ligand>
</feature>
<dbReference type="EC" id="7.1.1.-" evidence="1"/>
<dbReference type="EMBL" id="CR767821">
    <property type="protein sequence ID" value="CAH58093.1"/>
    <property type="molecule type" value="Genomic_DNA"/>
</dbReference>
<dbReference type="EMBL" id="CR925678">
    <property type="protein sequence ID" value="CAI26877.1"/>
    <property type="molecule type" value="Genomic_DNA"/>
</dbReference>
<dbReference type="RefSeq" id="WP_011155053.1">
    <property type="nucleotide sequence ID" value="NC_005295.2"/>
</dbReference>
<dbReference type="SMR" id="Q5HBF8"/>
<dbReference type="GeneID" id="33057472"/>
<dbReference type="KEGG" id="eru:Erum3710"/>
<dbReference type="KEGG" id="erw:ERWE_CDS_03830"/>
<dbReference type="eggNOG" id="COG1143">
    <property type="taxonomic scope" value="Bacteria"/>
</dbReference>
<dbReference type="HOGENOM" id="CLU_067218_5_1_5"/>
<dbReference type="Proteomes" id="UP000001021">
    <property type="component" value="Chromosome"/>
</dbReference>
<dbReference type="GO" id="GO:0005886">
    <property type="term" value="C:plasma membrane"/>
    <property type="evidence" value="ECO:0007669"/>
    <property type="project" value="UniProtKB-SubCell"/>
</dbReference>
<dbReference type="GO" id="GO:0051539">
    <property type="term" value="F:4 iron, 4 sulfur cluster binding"/>
    <property type="evidence" value="ECO:0007669"/>
    <property type="project" value="UniProtKB-KW"/>
</dbReference>
<dbReference type="GO" id="GO:0005506">
    <property type="term" value="F:iron ion binding"/>
    <property type="evidence" value="ECO:0007669"/>
    <property type="project" value="UniProtKB-UniRule"/>
</dbReference>
<dbReference type="GO" id="GO:0050136">
    <property type="term" value="F:NADH:ubiquinone reductase (non-electrogenic) activity"/>
    <property type="evidence" value="ECO:0007669"/>
    <property type="project" value="UniProtKB-UniRule"/>
</dbReference>
<dbReference type="GO" id="GO:0048038">
    <property type="term" value="F:quinone binding"/>
    <property type="evidence" value="ECO:0007669"/>
    <property type="project" value="UniProtKB-KW"/>
</dbReference>
<dbReference type="GO" id="GO:0009060">
    <property type="term" value="P:aerobic respiration"/>
    <property type="evidence" value="ECO:0007669"/>
    <property type="project" value="TreeGrafter"/>
</dbReference>
<dbReference type="FunFam" id="3.30.70.3270:FF:000001">
    <property type="entry name" value="NADH-quinone oxidoreductase subunit I 1"/>
    <property type="match status" value="1"/>
</dbReference>
<dbReference type="Gene3D" id="3.30.70.3270">
    <property type="match status" value="1"/>
</dbReference>
<dbReference type="HAMAP" id="MF_01351">
    <property type="entry name" value="NDH1_NuoI"/>
    <property type="match status" value="1"/>
</dbReference>
<dbReference type="InterPro" id="IPR017896">
    <property type="entry name" value="4Fe4S_Fe-S-bd"/>
</dbReference>
<dbReference type="InterPro" id="IPR017900">
    <property type="entry name" value="4Fe4S_Fe_S_CS"/>
</dbReference>
<dbReference type="InterPro" id="IPR010226">
    <property type="entry name" value="NADH_quinone_OxRdtase_chainI"/>
</dbReference>
<dbReference type="NCBIfam" id="TIGR01971">
    <property type="entry name" value="NuoI"/>
    <property type="match status" value="1"/>
</dbReference>
<dbReference type="NCBIfam" id="NF004538">
    <property type="entry name" value="PRK05888.1-4"/>
    <property type="match status" value="1"/>
</dbReference>
<dbReference type="NCBIfam" id="NF004539">
    <property type="entry name" value="PRK05888.1-5"/>
    <property type="match status" value="1"/>
</dbReference>
<dbReference type="PANTHER" id="PTHR10849:SF20">
    <property type="entry name" value="NADH DEHYDROGENASE [UBIQUINONE] IRON-SULFUR PROTEIN 8, MITOCHONDRIAL"/>
    <property type="match status" value="1"/>
</dbReference>
<dbReference type="PANTHER" id="PTHR10849">
    <property type="entry name" value="NADH DEHYDROGENASE UBIQUINONE IRON-SULFUR PROTEIN 8, MITOCHONDRIAL"/>
    <property type="match status" value="1"/>
</dbReference>
<dbReference type="Pfam" id="PF12838">
    <property type="entry name" value="Fer4_7"/>
    <property type="match status" value="1"/>
</dbReference>
<dbReference type="SUPFAM" id="SSF54862">
    <property type="entry name" value="4Fe-4S ferredoxins"/>
    <property type="match status" value="1"/>
</dbReference>
<dbReference type="PROSITE" id="PS00198">
    <property type="entry name" value="4FE4S_FER_1"/>
    <property type="match status" value="2"/>
</dbReference>
<dbReference type="PROSITE" id="PS51379">
    <property type="entry name" value="4FE4S_FER_2"/>
    <property type="match status" value="2"/>
</dbReference>
<protein>
    <recommendedName>
        <fullName evidence="1">NADH-quinone oxidoreductase subunit I</fullName>
        <ecNumber evidence="1">7.1.1.-</ecNumber>
    </recommendedName>
    <alternativeName>
        <fullName evidence="1">NADH dehydrogenase I subunit I</fullName>
    </alternativeName>
    <alternativeName>
        <fullName evidence="1">NDH-1 subunit I</fullName>
    </alternativeName>
</protein>
<gene>
    <name evidence="1" type="primary">nuoI</name>
    <name type="ordered locus">Erum3710</name>
    <name type="ordered locus">ERWE_CDS_03830</name>
</gene>
<comment type="function">
    <text evidence="1">NDH-1 shuttles electrons from NADH, via FMN and iron-sulfur (Fe-S) centers, to quinones in the respiratory chain. The immediate electron acceptor for the enzyme in this species is believed to be ubiquinone. Couples the redox reaction to proton translocation (for every two electrons transferred, four hydrogen ions are translocated across the cytoplasmic membrane), and thus conserves the redox energy in a proton gradient.</text>
</comment>
<comment type="catalytic activity">
    <reaction evidence="1">
        <text>a quinone + NADH + 5 H(+)(in) = a quinol + NAD(+) + 4 H(+)(out)</text>
        <dbReference type="Rhea" id="RHEA:57888"/>
        <dbReference type="ChEBI" id="CHEBI:15378"/>
        <dbReference type="ChEBI" id="CHEBI:24646"/>
        <dbReference type="ChEBI" id="CHEBI:57540"/>
        <dbReference type="ChEBI" id="CHEBI:57945"/>
        <dbReference type="ChEBI" id="CHEBI:132124"/>
    </reaction>
</comment>
<comment type="cofactor">
    <cofactor evidence="1">
        <name>[4Fe-4S] cluster</name>
        <dbReference type="ChEBI" id="CHEBI:49883"/>
    </cofactor>
    <text evidence="1">Binds 2 [4Fe-4S] clusters per subunit.</text>
</comment>
<comment type="subunit">
    <text evidence="1">NDH-1 is composed of 14 different subunits. Subunits NuoA, H, J, K, L, M, N constitute the membrane sector of the complex.</text>
</comment>
<comment type="subcellular location">
    <subcellularLocation>
        <location evidence="1">Cell inner membrane</location>
        <topology evidence="1">Peripheral membrane protein</topology>
    </subcellularLocation>
</comment>
<comment type="similarity">
    <text evidence="1">Belongs to the complex I 23 kDa subunit family.</text>
</comment>
<proteinExistence type="inferred from homology"/>
<keyword id="KW-0004">4Fe-4S</keyword>
<keyword id="KW-0997">Cell inner membrane</keyword>
<keyword id="KW-1003">Cell membrane</keyword>
<keyword id="KW-0408">Iron</keyword>
<keyword id="KW-0411">Iron-sulfur</keyword>
<keyword id="KW-0472">Membrane</keyword>
<keyword id="KW-0479">Metal-binding</keyword>
<keyword id="KW-0520">NAD</keyword>
<keyword id="KW-0874">Quinone</keyword>
<keyword id="KW-0677">Repeat</keyword>
<keyword id="KW-1278">Translocase</keyword>
<keyword id="KW-0830">Ubiquinone</keyword>
<accession>Q5HBF8</accession>
<accession>Q5FDV2</accession>
<sequence>MINKRSLLASFINLPYSLFITFKGMYITLRYMFKPKVTLNYPLEKNPLSTRFRGEHALRTYKNGEERCIACKLCEAICPAQAITIEAQERDTDNSRRTVRYDIDMTKCIYCGFCQEACPVDAIVEGPNFEYATETREELMYNKSKLLHNGQIWEEAIDLRIKKNSKFY</sequence>
<name>NUOI_EHRRW</name>
<reference key="1">
    <citation type="journal article" date="2005" name="Proc. Natl. Acad. Sci. U.S.A.">
        <title>The genome of the heartwater agent Ehrlichia ruminantium contains multiple tandem repeats of actively variable copy number.</title>
        <authorList>
            <person name="Collins N.E."/>
            <person name="Liebenberg J."/>
            <person name="de Villiers E.P."/>
            <person name="Brayton K.A."/>
            <person name="Louw E."/>
            <person name="Pretorius A."/>
            <person name="Faber F.E."/>
            <person name="van Heerden H."/>
            <person name="Josemans A."/>
            <person name="van Kleef M."/>
            <person name="Steyn H.C."/>
            <person name="van Strijp M.F."/>
            <person name="Zweygarth E."/>
            <person name="Jongejan F."/>
            <person name="Maillard J.C."/>
            <person name="Berthier D."/>
            <person name="Botha M."/>
            <person name="Joubert F."/>
            <person name="Corton C.H."/>
            <person name="Thomson N.R."/>
            <person name="Allsopp M.T."/>
            <person name="Allsopp B.A."/>
        </authorList>
    </citation>
    <scope>NUCLEOTIDE SEQUENCE [LARGE SCALE GENOMIC DNA]</scope>
    <source>
        <strain>Welgevonden</strain>
    </source>
</reference>
<reference key="2">
    <citation type="journal article" date="2006" name="J. Bacteriol.">
        <title>Comparative genomic analysis of three strains of Ehrlichia ruminantium reveals an active process of genome size plasticity.</title>
        <authorList>
            <person name="Frutos R."/>
            <person name="Viari A."/>
            <person name="Ferraz C."/>
            <person name="Morgat A."/>
            <person name="Eychenie S."/>
            <person name="Kandassamy Y."/>
            <person name="Chantal I."/>
            <person name="Bensaid A."/>
            <person name="Coissac E."/>
            <person name="Vachiery N."/>
            <person name="Demaille J."/>
            <person name="Martinez D."/>
        </authorList>
    </citation>
    <scope>NUCLEOTIDE SEQUENCE [LARGE SCALE GENOMIC DNA]</scope>
    <source>
        <strain>Welgevonden</strain>
    </source>
</reference>
<evidence type="ECO:0000255" key="1">
    <source>
        <dbReference type="HAMAP-Rule" id="MF_01351"/>
    </source>
</evidence>